<feature type="chain" id="PRO_0000164748" description="Gene 30 protein">
    <location>
        <begin position="1"/>
        <end position="88"/>
    </location>
</feature>
<reference key="1">
    <citation type="journal article" date="1998" name="J. Mol. Biol.">
        <title>Genome structure of mycobacteriophage D29: implications for phage evolution.</title>
        <authorList>
            <person name="Ford M.E."/>
            <person name="Sarkis G.J."/>
            <person name="Belanger A.E."/>
            <person name="Hendrix R.W."/>
            <person name="Hatfull G.F."/>
        </authorList>
    </citation>
    <scope>NUCLEOTIDE SEQUENCE [LARGE SCALE GENOMIC DNA]</scope>
</reference>
<organismHost>
    <name type="scientific">Mycobacterium</name>
    <dbReference type="NCBI Taxonomy" id="1763"/>
</organismHost>
<gene>
    <name type="primary">30</name>
</gene>
<dbReference type="EMBL" id="AF022214">
    <property type="protein sequence ID" value="AAC18471.1"/>
    <property type="molecule type" value="Genomic_DNA"/>
</dbReference>
<dbReference type="PIR" id="D72803">
    <property type="entry name" value="D72803"/>
</dbReference>
<dbReference type="RefSeq" id="NP_046846.1">
    <property type="nucleotide sequence ID" value="NC_001900.1"/>
</dbReference>
<dbReference type="SMR" id="O64224"/>
<dbReference type="GeneID" id="1261558"/>
<dbReference type="KEGG" id="vg:1261558"/>
<dbReference type="OrthoDB" id="26251at10239"/>
<dbReference type="Proteomes" id="UP000002131">
    <property type="component" value="Segment"/>
</dbReference>
<dbReference type="InterPro" id="IPR022704">
    <property type="entry name" value="DUF2746"/>
</dbReference>
<dbReference type="Pfam" id="PF10874">
    <property type="entry name" value="DUF2746"/>
    <property type="match status" value="1"/>
</dbReference>
<name>VG30_BPMD2</name>
<proteinExistence type="predicted"/>
<sequence>MTELFNPDNPWETALLFFAVFCSVLPALLPFWFKIKKIDSQVSNSHDENLRDEITRGFKEVREDIRLLHEALNIERRERIAGDEKRCA</sequence>
<protein>
    <recommendedName>
        <fullName>Gene 30 protein</fullName>
    </recommendedName>
    <alternativeName>
        <fullName>Gp30</fullName>
    </alternativeName>
</protein>
<keyword id="KW-1185">Reference proteome</keyword>
<organism>
    <name type="scientific">Mycobacterium phage D29</name>
    <name type="common">Mycobacteriophage D29</name>
    <dbReference type="NCBI Taxonomy" id="28369"/>
    <lineage>
        <taxon>Viruses</taxon>
        <taxon>Duplodnaviria</taxon>
        <taxon>Heunggongvirae</taxon>
        <taxon>Uroviricota</taxon>
        <taxon>Caudoviricetes</taxon>
        <taxon>Fromanvirus</taxon>
    </lineage>
</organism>
<accession>O64224</accession>